<dbReference type="EMBL" id="CR860095">
    <property type="protein sequence ID" value="CAH92241.1"/>
    <property type="molecule type" value="mRNA"/>
</dbReference>
<dbReference type="RefSeq" id="NP_001126311.1">
    <property type="nucleotide sequence ID" value="NM_001132839.1"/>
</dbReference>
<dbReference type="SMR" id="Q5R7L9"/>
<dbReference type="FunCoup" id="Q5R7L9">
    <property type="interactions" value="2058"/>
</dbReference>
<dbReference type="STRING" id="9601.ENSPPYP00000017766"/>
<dbReference type="Ensembl" id="ENSPPYT00000018481.2">
    <property type="protein sequence ID" value="ENSPPYP00000017766.1"/>
    <property type="gene ID" value="ENSPPYG00000015885.2"/>
</dbReference>
<dbReference type="GeneID" id="100173290"/>
<dbReference type="KEGG" id="pon:100173290"/>
<dbReference type="CTD" id="6879"/>
<dbReference type="eggNOG" id="KOG4011">
    <property type="taxonomic scope" value="Eukaryota"/>
</dbReference>
<dbReference type="GeneTree" id="ENSGT00940000160861"/>
<dbReference type="HOGENOM" id="CLU_037860_0_1_1"/>
<dbReference type="InParanoid" id="Q5R7L9"/>
<dbReference type="OMA" id="NESDEHH"/>
<dbReference type="OrthoDB" id="153872at2759"/>
<dbReference type="TreeFam" id="TF313044"/>
<dbReference type="Proteomes" id="UP000001595">
    <property type="component" value="Chromosome 5"/>
</dbReference>
<dbReference type="GO" id="GO:0005737">
    <property type="term" value="C:cytoplasm"/>
    <property type="evidence" value="ECO:0007669"/>
    <property type="project" value="Ensembl"/>
</dbReference>
<dbReference type="GO" id="GO:0001673">
    <property type="term" value="C:male germ cell nucleus"/>
    <property type="evidence" value="ECO:0007669"/>
    <property type="project" value="Ensembl"/>
</dbReference>
<dbReference type="GO" id="GO:0071339">
    <property type="term" value="C:MLL1 complex"/>
    <property type="evidence" value="ECO:0000250"/>
    <property type="project" value="UniProtKB"/>
</dbReference>
<dbReference type="GO" id="GO:0005669">
    <property type="term" value="C:transcription factor TFIID complex"/>
    <property type="evidence" value="ECO:0000250"/>
    <property type="project" value="UniProtKB"/>
</dbReference>
<dbReference type="GO" id="GO:0033276">
    <property type="term" value="C:transcription factor TFTC complex"/>
    <property type="evidence" value="ECO:0007669"/>
    <property type="project" value="Ensembl"/>
</dbReference>
<dbReference type="GO" id="GO:0035035">
    <property type="term" value="F:histone acetyltransferase binding"/>
    <property type="evidence" value="ECO:0007669"/>
    <property type="project" value="Ensembl"/>
</dbReference>
<dbReference type="GO" id="GO:0061628">
    <property type="term" value="F:histone H3K27me3 reader activity"/>
    <property type="evidence" value="ECO:0007669"/>
    <property type="project" value="Ensembl"/>
</dbReference>
<dbReference type="GO" id="GO:0046966">
    <property type="term" value="F:nuclear thyroid hormone receptor binding"/>
    <property type="evidence" value="ECO:0007669"/>
    <property type="project" value="Ensembl"/>
</dbReference>
<dbReference type="GO" id="GO:0042809">
    <property type="term" value="F:nuclear vitamin D receptor binding"/>
    <property type="evidence" value="ECO:0007669"/>
    <property type="project" value="Ensembl"/>
</dbReference>
<dbReference type="GO" id="GO:0106140">
    <property type="term" value="F:P-TEFb complex binding"/>
    <property type="evidence" value="ECO:0007669"/>
    <property type="project" value="Ensembl"/>
</dbReference>
<dbReference type="GO" id="GO:0046982">
    <property type="term" value="F:protein heterodimerization activity"/>
    <property type="evidence" value="ECO:0007669"/>
    <property type="project" value="Ensembl"/>
</dbReference>
<dbReference type="GO" id="GO:0016251">
    <property type="term" value="F:RNA polymerase II general transcription initiation factor activity"/>
    <property type="evidence" value="ECO:0007669"/>
    <property type="project" value="Ensembl"/>
</dbReference>
<dbReference type="GO" id="GO:0001097">
    <property type="term" value="F:TFIIH-class transcription factor complex binding"/>
    <property type="evidence" value="ECO:0007669"/>
    <property type="project" value="Ensembl"/>
</dbReference>
<dbReference type="GO" id="GO:0000976">
    <property type="term" value="F:transcription cis-regulatory region binding"/>
    <property type="evidence" value="ECO:0007669"/>
    <property type="project" value="Ensembl"/>
</dbReference>
<dbReference type="GO" id="GO:0030520">
    <property type="term" value="P:estrogen receptor signaling pathway"/>
    <property type="evidence" value="ECO:0007669"/>
    <property type="project" value="Ensembl"/>
</dbReference>
<dbReference type="GO" id="GO:0042789">
    <property type="term" value="P:mRNA transcription by RNA polymerase II"/>
    <property type="evidence" value="ECO:0007669"/>
    <property type="project" value="Ensembl"/>
</dbReference>
<dbReference type="GO" id="GO:0045344">
    <property type="term" value="P:negative regulation of MHC class I biosynthetic process"/>
    <property type="evidence" value="ECO:0007669"/>
    <property type="project" value="Ensembl"/>
</dbReference>
<dbReference type="GO" id="GO:0045347">
    <property type="term" value="P:negative regulation of MHC class II biosynthetic process"/>
    <property type="evidence" value="ECO:0007669"/>
    <property type="project" value="Ensembl"/>
</dbReference>
<dbReference type="GO" id="GO:0000122">
    <property type="term" value="P:negative regulation of transcription by RNA polymerase II"/>
    <property type="evidence" value="ECO:0007669"/>
    <property type="project" value="Ensembl"/>
</dbReference>
<dbReference type="GO" id="GO:0060261">
    <property type="term" value="P:positive regulation of transcription initiation by RNA polymerase II"/>
    <property type="evidence" value="ECO:0007669"/>
    <property type="project" value="Ensembl"/>
</dbReference>
<dbReference type="GO" id="GO:0051123">
    <property type="term" value="P:RNA polymerase II preinitiation complex assembly"/>
    <property type="evidence" value="ECO:0007669"/>
    <property type="project" value="Ensembl"/>
</dbReference>
<dbReference type="CDD" id="cd08047">
    <property type="entry name" value="TAF7"/>
    <property type="match status" value="1"/>
</dbReference>
<dbReference type="InterPro" id="IPR037817">
    <property type="entry name" value="TAF7"/>
</dbReference>
<dbReference type="InterPro" id="IPR006751">
    <property type="entry name" value="TAFII55_prot_cons_reg"/>
</dbReference>
<dbReference type="PANTHER" id="PTHR12228">
    <property type="entry name" value="TRANSCRIPTION INITIATION FACTOR TFIID 55 KD SUBUNIT-RELATED"/>
    <property type="match status" value="1"/>
</dbReference>
<dbReference type="PANTHER" id="PTHR12228:SF6">
    <property type="entry name" value="TRANSCRIPTION INITIATION FACTOR TFIID SUBUNIT 7"/>
    <property type="match status" value="1"/>
</dbReference>
<dbReference type="Pfam" id="PF04658">
    <property type="entry name" value="TAFII55_N"/>
    <property type="match status" value="1"/>
</dbReference>
<dbReference type="SMART" id="SM01370">
    <property type="entry name" value="TAFII55_N"/>
    <property type="match status" value="1"/>
</dbReference>
<reference key="1">
    <citation type="submission" date="2004-11" db="EMBL/GenBank/DDBJ databases">
        <authorList>
            <consortium name="The German cDNA consortium"/>
        </authorList>
    </citation>
    <scope>NUCLEOTIDE SEQUENCE [LARGE SCALE MRNA]</scope>
    <source>
        <tissue>Heart</tissue>
    </source>
</reference>
<sequence>MSKSKDDAPHELESQFILRLPPEYASTVRRAVQSGHVNLKDRLTIELHPDGRHGIVRVDRVPLASKLVDLPCVMESLKTIDKKTFYKTADICQMLVSTVDGDLYPPVEEPVASTDPKASKKKDKDKEKKFIWNHGITLPLKNVRKRRFRKTAKKKYIESPDVEKEVKRLLSTDAEAVSTRWEIIAEDETKEAENQGLDISSPGMSGHRQGHDSLEHDELREIFNDLSSSSEDEDETQHQDEEDINIIDTEEDLERQLQDKLNESDEQHQENEGTNQLVMGIQKQIDNMKGKLQETQDRAKRQEDLIMKVENLALKNRFQAVLDELKQKEDREKEQLSSLQEELESLLEK</sequence>
<accession>Q5R7L9</accession>
<proteinExistence type="evidence at transcript level"/>
<organism>
    <name type="scientific">Pongo abelii</name>
    <name type="common">Sumatran orangutan</name>
    <name type="synonym">Pongo pygmaeus abelii</name>
    <dbReference type="NCBI Taxonomy" id="9601"/>
    <lineage>
        <taxon>Eukaryota</taxon>
        <taxon>Metazoa</taxon>
        <taxon>Chordata</taxon>
        <taxon>Craniata</taxon>
        <taxon>Vertebrata</taxon>
        <taxon>Euteleostomi</taxon>
        <taxon>Mammalia</taxon>
        <taxon>Eutheria</taxon>
        <taxon>Euarchontoglires</taxon>
        <taxon>Primates</taxon>
        <taxon>Haplorrhini</taxon>
        <taxon>Catarrhini</taxon>
        <taxon>Hominidae</taxon>
        <taxon>Pongo</taxon>
    </lineage>
</organism>
<keyword id="KW-0175">Coiled coil</keyword>
<keyword id="KW-0539">Nucleus</keyword>
<keyword id="KW-0597">Phosphoprotein</keyword>
<keyword id="KW-1185">Reference proteome</keyword>
<keyword id="KW-0804">Transcription</keyword>
<keyword id="KW-0805">Transcription regulation</keyword>
<keyword id="KW-0832">Ubl conjugation</keyword>
<evidence type="ECO:0000250" key="1">
    <source>
        <dbReference type="UniProtKB" id="Q15545"/>
    </source>
</evidence>
<evidence type="ECO:0000250" key="2">
    <source>
        <dbReference type="UniProtKB" id="Q9R1C0"/>
    </source>
</evidence>
<evidence type="ECO:0000255" key="3"/>
<evidence type="ECO:0000256" key="4">
    <source>
        <dbReference type="SAM" id="MobiDB-lite"/>
    </source>
</evidence>
<evidence type="ECO:0000305" key="5"/>
<feature type="chain" id="PRO_0000293546" description="Transcription initiation factor TFIID subunit 7">
    <location>
        <begin position="1"/>
        <end position="349"/>
    </location>
</feature>
<feature type="region of interest" description="Disordered" evidence="4">
    <location>
        <begin position="105"/>
        <end position="126"/>
    </location>
</feature>
<feature type="region of interest" description="Disordered" evidence="4">
    <location>
        <begin position="186"/>
        <end position="212"/>
    </location>
</feature>
<feature type="region of interest" description="Disordered" evidence="4">
    <location>
        <begin position="227"/>
        <end position="247"/>
    </location>
</feature>
<feature type="region of interest" description="Disordered" evidence="4">
    <location>
        <begin position="328"/>
        <end position="349"/>
    </location>
</feature>
<feature type="coiled-coil region" evidence="3">
    <location>
        <begin position="236"/>
        <end position="341"/>
    </location>
</feature>
<feature type="compositionally biased region" description="Acidic residues" evidence="4">
    <location>
        <begin position="230"/>
        <end position="247"/>
    </location>
</feature>
<feature type="modified residue" description="Phosphoserine" evidence="1">
    <location>
        <position position="171"/>
    </location>
</feature>
<feature type="modified residue" description="Phosphoserine" evidence="1">
    <location>
        <position position="200"/>
    </location>
</feature>
<feature type="modified residue" description="Phosphoserine" evidence="1">
    <location>
        <position position="201"/>
    </location>
</feature>
<feature type="modified residue" description="Phosphoserine" evidence="1">
    <location>
        <position position="213"/>
    </location>
</feature>
<feature type="modified residue" description="Phosphoserine" evidence="1">
    <location>
        <position position="264"/>
    </location>
</feature>
<name>TAF7_PONAB</name>
<comment type="function">
    <text evidence="1">The TFIID basal transcription factor complex plays a major role in the initiation of RNA polymerase II (Pol II)-dependent transcription. TFIID recognizes and binds promoters with or without a TATA box via its subunit TBP, a TATA-box-binding protein, and promotes assembly of the pre-initiation complex (PIC). The TFIID complex consists of TBP and TBP-associated factors (TAFs), including TAF1, TAF2, TAF3, TAF4, TAF5, TAF6, TAF7, TAF8, TAF9, TAF10, TAF11, TAF12 and TAF13. TAF7 forms a promoter DNA binding subcomplex of TFIID, together with TAF1 and TAF2. Part of a TFIID complex containing TAF10 (TFIID alpha) and a TFIID complex lacking TAF10 (TFIID beta).</text>
</comment>
<comment type="subunit">
    <text evidence="1">Component of the TFIID basal transcription factor complex, composed of TATA-box-binding protein TBP, and a number of TBP-associated factors (TAFs), including TAF1, TAF2, TAF3, TAF4, TAF5, TAF6, TAF7, TAF8, TAF9, TAF10, TAF11, TAF12 and TAF13. Part of a TFIID-containing RNA polymerase II pre-initiation complex that is composed of TBP and at least GTF2A1, GTF2A2, GTF2E1, GTF2E2, GTF2F1, GTF2H2, GTF2H3, GTF2H4, GTF2H5, GTF2B, TCEA1, ERCC2, ERCC3, TAF1, TAF2, TAF3, TAF4, TAF5, TAF6, TAF7, TAF8, TAF9, TAF10, TAF11, TAF12 and TAF13. Interacts with TAF1; the interaction is direct. Interacts with TAF1, TAF5, TAF11, TAF12, and TAF13, but not with TAF10 or TBP. Component of some MLL1/MLL complex, at least composed of the core components KMT2A/MLL1, ASH2L, HCFC1/HCF1, WDR5 and RBBP5, as well as the facultative components BACC1, CHD8, E2F6, HSP70, INO80C, KANSL1, LAS1L, MAX, MCRS1, MGA, MYST1/MOF, PELP1, PHF20, PRP31, RING2, RUVB1/TIP49A, RUVB2/TIP49B, SENP3, TAF1, TAF4, TAF6, TAF7, TAF9 and TEX10. Interacts with CIITA and TAF1 and inhibits their acetyltransferase activity, and behaving as a repressor of CIITA- and TAF1-regulated promoters.</text>
</comment>
<comment type="subcellular location">
    <subcellularLocation>
        <location evidence="2">Nucleus</location>
    </subcellularLocation>
</comment>
<comment type="PTM">
    <text evidence="1">Phosphorylated by CIITA. Phosphorylation at Ser-264 by TAF1 in early G1 phase disrupts binding to TAF1.</text>
</comment>
<comment type="PTM">
    <text evidence="1">Ubiquitinated by TRIM26; leading to proteasomal degradation.</text>
</comment>
<comment type="similarity">
    <text evidence="5">Belongs to the TAF7 family.</text>
</comment>
<gene>
    <name type="primary">TAF7</name>
</gene>
<protein>
    <recommendedName>
        <fullName>Transcription initiation factor TFIID subunit 7</fullName>
    </recommendedName>
</protein>